<name>TGT_STRSV</name>
<organism>
    <name type="scientific">Streptococcus sanguinis (strain SK36)</name>
    <dbReference type="NCBI Taxonomy" id="388919"/>
    <lineage>
        <taxon>Bacteria</taxon>
        <taxon>Bacillati</taxon>
        <taxon>Bacillota</taxon>
        <taxon>Bacilli</taxon>
        <taxon>Lactobacillales</taxon>
        <taxon>Streptococcaceae</taxon>
        <taxon>Streptococcus</taxon>
    </lineage>
</organism>
<keyword id="KW-0328">Glycosyltransferase</keyword>
<keyword id="KW-0479">Metal-binding</keyword>
<keyword id="KW-0671">Queuosine biosynthesis</keyword>
<keyword id="KW-1185">Reference proteome</keyword>
<keyword id="KW-0808">Transferase</keyword>
<keyword id="KW-0819">tRNA processing</keyword>
<keyword id="KW-0862">Zinc</keyword>
<proteinExistence type="inferred from homology"/>
<reference key="1">
    <citation type="journal article" date="2007" name="J. Bacteriol.">
        <title>Genome of the opportunistic pathogen Streptococcus sanguinis.</title>
        <authorList>
            <person name="Xu P."/>
            <person name="Alves J.M."/>
            <person name="Kitten T."/>
            <person name="Brown A."/>
            <person name="Chen Z."/>
            <person name="Ozaki L.S."/>
            <person name="Manque P."/>
            <person name="Ge X."/>
            <person name="Serrano M.G."/>
            <person name="Puiu D."/>
            <person name="Hendricks S."/>
            <person name="Wang Y."/>
            <person name="Chaplin M.D."/>
            <person name="Akan D."/>
            <person name="Paik S."/>
            <person name="Peterson D.L."/>
            <person name="Macrina F.L."/>
            <person name="Buck G.A."/>
        </authorList>
    </citation>
    <scope>NUCLEOTIDE SEQUENCE [LARGE SCALE GENOMIC DNA]</scope>
    <source>
        <strain>SK36</strain>
    </source>
</reference>
<protein>
    <recommendedName>
        <fullName evidence="1">Queuine tRNA-ribosyltransferase</fullName>
        <ecNumber evidence="1">2.4.2.29</ecNumber>
    </recommendedName>
    <alternativeName>
        <fullName evidence="1">Guanine insertion enzyme</fullName>
    </alternativeName>
    <alternativeName>
        <fullName evidence="1">tRNA-guanine transglycosylase</fullName>
    </alternativeName>
</protein>
<feature type="chain" id="PRO_1000016875" description="Queuine tRNA-ribosyltransferase">
    <location>
        <begin position="1"/>
        <end position="380"/>
    </location>
</feature>
<feature type="region of interest" description="RNA binding" evidence="1">
    <location>
        <begin position="251"/>
        <end position="257"/>
    </location>
</feature>
<feature type="region of interest" description="RNA binding; important for wobble base 34 recognition" evidence="1">
    <location>
        <begin position="275"/>
        <end position="279"/>
    </location>
</feature>
<feature type="active site" description="Proton acceptor" evidence="1">
    <location>
        <position position="96"/>
    </location>
</feature>
<feature type="active site" description="Nucleophile" evidence="1">
    <location>
        <position position="270"/>
    </location>
</feature>
<feature type="binding site" evidence="1">
    <location>
        <begin position="96"/>
        <end position="100"/>
    </location>
    <ligand>
        <name>substrate</name>
    </ligand>
</feature>
<feature type="binding site" evidence="1">
    <location>
        <position position="150"/>
    </location>
    <ligand>
        <name>substrate</name>
    </ligand>
</feature>
<feature type="binding site" evidence="1">
    <location>
        <position position="193"/>
    </location>
    <ligand>
        <name>substrate</name>
    </ligand>
</feature>
<feature type="binding site" evidence="1">
    <location>
        <position position="220"/>
    </location>
    <ligand>
        <name>substrate</name>
    </ligand>
</feature>
<feature type="binding site" evidence="1">
    <location>
        <position position="308"/>
    </location>
    <ligand>
        <name>Zn(2+)</name>
        <dbReference type="ChEBI" id="CHEBI:29105"/>
    </ligand>
</feature>
<feature type="binding site" evidence="1">
    <location>
        <position position="310"/>
    </location>
    <ligand>
        <name>Zn(2+)</name>
        <dbReference type="ChEBI" id="CHEBI:29105"/>
    </ligand>
</feature>
<feature type="binding site" evidence="1">
    <location>
        <position position="313"/>
    </location>
    <ligand>
        <name>Zn(2+)</name>
        <dbReference type="ChEBI" id="CHEBI:29105"/>
    </ligand>
</feature>
<feature type="binding site" evidence="1">
    <location>
        <position position="339"/>
    </location>
    <ligand>
        <name>Zn(2+)</name>
        <dbReference type="ChEBI" id="CHEBI:29105"/>
    </ligand>
</feature>
<sequence>MSTSPIQYRLIKKEKHTGARLGEIITPHGTFPTPMFMPVGTQATVKTQSPEELKQMGSGIILANTYHLWLRPGDELIARAGGLHTFMNWDQPILTDSGGFQVYSLADSRNITEEGVTFKNHLNGSKMFLSPEKAISIQNNLGSDIMMSFDECPQFYQPYDYVKKSIERTSRWAERGLKAHSRPHDQGLFGIVQGAGFEDLRRQSAQDLVSMDFPGYSIGGLAVGESHEEMNAVLDFTTPMLPENKPRYLMGVGAPDSLIDGVIRGVDMFDCVLPTRIARNGTCMTSEGRLVVKNAQFEEDFTPLDHDCDCYTCSNYTRAYIRHLLKADETFGIRLTSYHNLYFLVNLMKKVRQAIMDDNLLEFREDFIERYGYNKSSRNF</sequence>
<accession>A3CK60</accession>
<comment type="function">
    <text evidence="1">Catalyzes the base-exchange of a guanine (G) residue with the queuine precursor 7-aminomethyl-7-deazaguanine (PreQ1) at position 34 (anticodon wobble position) in tRNAs with GU(N) anticodons (tRNA-Asp, -Asn, -His and -Tyr). Catalysis occurs through a double-displacement mechanism. The nucleophile active site attacks the C1' of nucleotide 34 to detach the guanine base from the RNA, forming a covalent enzyme-RNA intermediate. The proton acceptor active site deprotonates the incoming PreQ1, allowing a nucleophilic attack on the C1' of the ribose to form the product. After dissociation, two additional enzymatic reactions on the tRNA convert PreQ1 to queuine (Q), resulting in the hypermodified nucleoside queuosine (7-(((4,5-cis-dihydroxy-2-cyclopenten-1-yl)amino)methyl)-7-deazaguanosine).</text>
</comment>
<comment type="catalytic activity">
    <reaction evidence="1">
        <text>7-aminomethyl-7-carbaguanine + guanosine(34) in tRNA = 7-aminomethyl-7-carbaguanosine(34) in tRNA + guanine</text>
        <dbReference type="Rhea" id="RHEA:24104"/>
        <dbReference type="Rhea" id="RHEA-COMP:10341"/>
        <dbReference type="Rhea" id="RHEA-COMP:10342"/>
        <dbReference type="ChEBI" id="CHEBI:16235"/>
        <dbReference type="ChEBI" id="CHEBI:58703"/>
        <dbReference type="ChEBI" id="CHEBI:74269"/>
        <dbReference type="ChEBI" id="CHEBI:82833"/>
        <dbReference type="EC" id="2.4.2.29"/>
    </reaction>
</comment>
<comment type="cofactor">
    <cofactor evidence="1">
        <name>Zn(2+)</name>
        <dbReference type="ChEBI" id="CHEBI:29105"/>
    </cofactor>
    <text evidence="1">Binds 1 zinc ion per subunit.</text>
</comment>
<comment type="pathway">
    <text evidence="1">tRNA modification; tRNA-queuosine biosynthesis.</text>
</comment>
<comment type="subunit">
    <text evidence="1">Homodimer. Within each dimer, one monomer is responsible for RNA recognition and catalysis, while the other monomer binds to the replacement base PreQ1.</text>
</comment>
<comment type="similarity">
    <text evidence="1">Belongs to the queuine tRNA-ribosyltransferase family.</text>
</comment>
<evidence type="ECO:0000255" key="1">
    <source>
        <dbReference type="HAMAP-Rule" id="MF_00168"/>
    </source>
</evidence>
<dbReference type="EC" id="2.4.2.29" evidence="1"/>
<dbReference type="EMBL" id="CP000387">
    <property type="protein sequence ID" value="ABN43565.1"/>
    <property type="molecule type" value="Genomic_DNA"/>
</dbReference>
<dbReference type="RefSeq" id="WP_011836333.1">
    <property type="nucleotide sequence ID" value="NC_009009.1"/>
</dbReference>
<dbReference type="RefSeq" id="YP_001034115.1">
    <property type="nucleotide sequence ID" value="NC_009009.1"/>
</dbReference>
<dbReference type="SMR" id="A3CK60"/>
<dbReference type="STRING" id="388919.SSA_0104"/>
<dbReference type="KEGG" id="ssa:SSA_0104"/>
<dbReference type="PATRIC" id="fig|388919.9.peg.97"/>
<dbReference type="eggNOG" id="COG0343">
    <property type="taxonomic scope" value="Bacteria"/>
</dbReference>
<dbReference type="HOGENOM" id="CLU_022060_0_1_9"/>
<dbReference type="OrthoDB" id="9805417at2"/>
<dbReference type="UniPathway" id="UPA00392"/>
<dbReference type="Proteomes" id="UP000002148">
    <property type="component" value="Chromosome"/>
</dbReference>
<dbReference type="GO" id="GO:0005829">
    <property type="term" value="C:cytosol"/>
    <property type="evidence" value="ECO:0007669"/>
    <property type="project" value="TreeGrafter"/>
</dbReference>
<dbReference type="GO" id="GO:0046872">
    <property type="term" value="F:metal ion binding"/>
    <property type="evidence" value="ECO:0007669"/>
    <property type="project" value="UniProtKB-KW"/>
</dbReference>
<dbReference type="GO" id="GO:0008479">
    <property type="term" value="F:tRNA-guanosine(34) queuine transglycosylase activity"/>
    <property type="evidence" value="ECO:0007669"/>
    <property type="project" value="UniProtKB-UniRule"/>
</dbReference>
<dbReference type="GO" id="GO:0008616">
    <property type="term" value="P:queuosine biosynthetic process"/>
    <property type="evidence" value="ECO:0007669"/>
    <property type="project" value="UniProtKB-UniRule"/>
</dbReference>
<dbReference type="GO" id="GO:0002099">
    <property type="term" value="P:tRNA wobble guanine modification"/>
    <property type="evidence" value="ECO:0007669"/>
    <property type="project" value="TreeGrafter"/>
</dbReference>
<dbReference type="GO" id="GO:0101030">
    <property type="term" value="P:tRNA-guanine transglycosylation"/>
    <property type="evidence" value="ECO:0007669"/>
    <property type="project" value="InterPro"/>
</dbReference>
<dbReference type="FunFam" id="3.20.20.105:FF:000001">
    <property type="entry name" value="Queuine tRNA-ribosyltransferase"/>
    <property type="match status" value="1"/>
</dbReference>
<dbReference type="Gene3D" id="3.20.20.105">
    <property type="entry name" value="Queuine tRNA-ribosyltransferase-like"/>
    <property type="match status" value="1"/>
</dbReference>
<dbReference type="HAMAP" id="MF_00168">
    <property type="entry name" value="Q_tRNA_Tgt"/>
    <property type="match status" value="1"/>
</dbReference>
<dbReference type="InterPro" id="IPR050076">
    <property type="entry name" value="ArchSynthase1/Queuine_TRR"/>
</dbReference>
<dbReference type="InterPro" id="IPR004803">
    <property type="entry name" value="TGT"/>
</dbReference>
<dbReference type="InterPro" id="IPR036511">
    <property type="entry name" value="TGT-like_sf"/>
</dbReference>
<dbReference type="InterPro" id="IPR002616">
    <property type="entry name" value="tRNA_ribo_trans-like"/>
</dbReference>
<dbReference type="NCBIfam" id="TIGR00430">
    <property type="entry name" value="Q_tRNA_tgt"/>
    <property type="match status" value="1"/>
</dbReference>
<dbReference type="NCBIfam" id="TIGR00449">
    <property type="entry name" value="tgt_general"/>
    <property type="match status" value="1"/>
</dbReference>
<dbReference type="PANTHER" id="PTHR46499">
    <property type="entry name" value="QUEUINE TRNA-RIBOSYLTRANSFERASE"/>
    <property type="match status" value="1"/>
</dbReference>
<dbReference type="PANTHER" id="PTHR46499:SF1">
    <property type="entry name" value="QUEUINE TRNA-RIBOSYLTRANSFERASE"/>
    <property type="match status" value="1"/>
</dbReference>
<dbReference type="Pfam" id="PF01702">
    <property type="entry name" value="TGT"/>
    <property type="match status" value="1"/>
</dbReference>
<dbReference type="SUPFAM" id="SSF51713">
    <property type="entry name" value="tRNA-guanine transglycosylase"/>
    <property type="match status" value="1"/>
</dbReference>
<gene>
    <name evidence="1" type="primary">tgt</name>
    <name type="ordered locus">SSA_0104</name>
</gene>